<reference key="1">
    <citation type="journal article" date="2000" name="Science">
        <title>The genome sequence of Drosophila melanogaster.</title>
        <authorList>
            <person name="Adams M.D."/>
            <person name="Celniker S.E."/>
            <person name="Holt R.A."/>
            <person name="Evans C.A."/>
            <person name="Gocayne J.D."/>
            <person name="Amanatides P.G."/>
            <person name="Scherer S.E."/>
            <person name="Li P.W."/>
            <person name="Hoskins R.A."/>
            <person name="Galle R.F."/>
            <person name="George R.A."/>
            <person name="Lewis S.E."/>
            <person name="Richards S."/>
            <person name="Ashburner M."/>
            <person name="Henderson S.N."/>
            <person name="Sutton G.G."/>
            <person name="Wortman J.R."/>
            <person name="Yandell M.D."/>
            <person name="Zhang Q."/>
            <person name="Chen L.X."/>
            <person name="Brandon R.C."/>
            <person name="Rogers Y.-H.C."/>
            <person name="Blazej R.G."/>
            <person name="Champe M."/>
            <person name="Pfeiffer B.D."/>
            <person name="Wan K.H."/>
            <person name="Doyle C."/>
            <person name="Baxter E.G."/>
            <person name="Helt G."/>
            <person name="Nelson C.R."/>
            <person name="Miklos G.L.G."/>
            <person name="Abril J.F."/>
            <person name="Agbayani A."/>
            <person name="An H.-J."/>
            <person name="Andrews-Pfannkoch C."/>
            <person name="Baldwin D."/>
            <person name="Ballew R.M."/>
            <person name="Basu A."/>
            <person name="Baxendale J."/>
            <person name="Bayraktaroglu L."/>
            <person name="Beasley E.M."/>
            <person name="Beeson K.Y."/>
            <person name="Benos P.V."/>
            <person name="Berman B.P."/>
            <person name="Bhandari D."/>
            <person name="Bolshakov S."/>
            <person name="Borkova D."/>
            <person name="Botchan M.R."/>
            <person name="Bouck J."/>
            <person name="Brokstein P."/>
            <person name="Brottier P."/>
            <person name="Burtis K.C."/>
            <person name="Busam D.A."/>
            <person name="Butler H."/>
            <person name="Cadieu E."/>
            <person name="Center A."/>
            <person name="Chandra I."/>
            <person name="Cherry J.M."/>
            <person name="Cawley S."/>
            <person name="Dahlke C."/>
            <person name="Davenport L.B."/>
            <person name="Davies P."/>
            <person name="de Pablos B."/>
            <person name="Delcher A."/>
            <person name="Deng Z."/>
            <person name="Mays A.D."/>
            <person name="Dew I."/>
            <person name="Dietz S.M."/>
            <person name="Dodson K."/>
            <person name="Doup L.E."/>
            <person name="Downes M."/>
            <person name="Dugan-Rocha S."/>
            <person name="Dunkov B.C."/>
            <person name="Dunn P."/>
            <person name="Durbin K.J."/>
            <person name="Evangelista C.C."/>
            <person name="Ferraz C."/>
            <person name="Ferriera S."/>
            <person name="Fleischmann W."/>
            <person name="Fosler C."/>
            <person name="Gabrielian A.E."/>
            <person name="Garg N.S."/>
            <person name="Gelbart W.M."/>
            <person name="Glasser K."/>
            <person name="Glodek A."/>
            <person name="Gong F."/>
            <person name="Gorrell J.H."/>
            <person name="Gu Z."/>
            <person name="Guan P."/>
            <person name="Harris M."/>
            <person name="Harris N.L."/>
            <person name="Harvey D.A."/>
            <person name="Heiman T.J."/>
            <person name="Hernandez J.R."/>
            <person name="Houck J."/>
            <person name="Hostin D."/>
            <person name="Houston K.A."/>
            <person name="Howland T.J."/>
            <person name="Wei M.-H."/>
            <person name="Ibegwam C."/>
            <person name="Jalali M."/>
            <person name="Kalush F."/>
            <person name="Karpen G.H."/>
            <person name="Ke Z."/>
            <person name="Kennison J.A."/>
            <person name="Ketchum K.A."/>
            <person name="Kimmel B.E."/>
            <person name="Kodira C.D."/>
            <person name="Kraft C.L."/>
            <person name="Kravitz S."/>
            <person name="Kulp D."/>
            <person name="Lai Z."/>
            <person name="Lasko P."/>
            <person name="Lei Y."/>
            <person name="Levitsky A.A."/>
            <person name="Li J.H."/>
            <person name="Li Z."/>
            <person name="Liang Y."/>
            <person name="Lin X."/>
            <person name="Liu X."/>
            <person name="Mattei B."/>
            <person name="McIntosh T.C."/>
            <person name="McLeod M.P."/>
            <person name="McPherson D."/>
            <person name="Merkulov G."/>
            <person name="Milshina N.V."/>
            <person name="Mobarry C."/>
            <person name="Morris J."/>
            <person name="Moshrefi A."/>
            <person name="Mount S.M."/>
            <person name="Moy M."/>
            <person name="Murphy B."/>
            <person name="Murphy L."/>
            <person name="Muzny D.M."/>
            <person name="Nelson D.L."/>
            <person name="Nelson D.R."/>
            <person name="Nelson K.A."/>
            <person name="Nixon K."/>
            <person name="Nusskern D.R."/>
            <person name="Pacleb J.M."/>
            <person name="Palazzolo M."/>
            <person name="Pittman G.S."/>
            <person name="Pan S."/>
            <person name="Pollard J."/>
            <person name="Puri V."/>
            <person name="Reese M.G."/>
            <person name="Reinert K."/>
            <person name="Remington K."/>
            <person name="Saunders R.D.C."/>
            <person name="Scheeler F."/>
            <person name="Shen H."/>
            <person name="Shue B.C."/>
            <person name="Siden-Kiamos I."/>
            <person name="Simpson M."/>
            <person name="Skupski M.P."/>
            <person name="Smith T.J."/>
            <person name="Spier E."/>
            <person name="Spradling A.C."/>
            <person name="Stapleton M."/>
            <person name="Strong R."/>
            <person name="Sun E."/>
            <person name="Svirskas R."/>
            <person name="Tector C."/>
            <person name="Turner R."/>
            <person name="Venter E."/>
            <person name="Wang A.H."/>
            <person name="Wang X."/>
            <person name="Wang Z.-Y."/>
            <person name="Wassarman D.A."/>
            <person name="Weinstock G.M."/>
            <person name="Weissenbach J."/>
            <person name="Williams S.M."/>
            <person name="Woodage T."/>
            <person name="Worley K.C."/>
            <person name="Wu D."/>
            <person name="Yang S."/>
            <person name="Yao Q.A."/>
            <person name="Ye J."/>
            <person name="Yeh R.-F."/>
            <person name="Zaveri J.S."/>
            <person name="Zhan M."/>
            <person name="Zhang G."/>
            <person name="Zhao Q."/>
            <person name="Zheng L."/>
            <person name="Zheng X.H."/>
            <person name="Zhong F.N."/>
            <person name="Zhong W."/>
            <person name="Zhou X."/>
            <person name="Zhu S.C."/>
            <person name="Zhu X."/>
            <person name="Smith H.O."/>
            <person name="Gibbs R.A."/>
            <person name="Myers E.W."/>
            <person name="Rubin G.M."/>
            <person name="Venter J.C."/>
        </authorList>
    </citation>
    <scope>NUCLEOTIDE SEQUENCE [LARGE SCALE GENOMIC DNA]</scope>
    <source>
        <strain>Berkeley</strain>
    </source>
</reference>
<reference key="2">
    <citation type="journal article" date="2002" name="Genome Biol.">
        <title>Annotation of the Drosophila melanogaster euchromatic genome: a systematic review.</title>
        <authorList>
            <person name="Misra S."/>
            <person name="Crosby M.A."/>
            <person name="Mungall C.J."/>
            <person name="Matthews B.B."/>
            <person name="Campbell K.S."/>
            <person name="Hradecky P."/>
            <person name="Huang Y."/>
            <person name="Kaminker J.S."/>
            <person name="Millburn G.H."/>
            <person name="Prochnik S.E."/>
            <person name="Smith C.D."/>
            <person name="Tupy J.L."/>
            <person name="Whitfield E.J."/>
            <person name="Bayraktaroglu L."/>
            <person name="Berman B.P."/>
            <person name="Bettencourt B.R."/>
            <person name="Celniker S.E."/>
            <person name="de Grey A.D.N.J."/>
            <person name="Drysdale R.A."/>
            <person name="Harris N.L."/>
            <person name="Richter J."/>
            <person name="Russo S."/>
            <person name="Schroeder A.J."/>
            <person name="Shu S.Q."/>
            <person name="Stapleton M."/>
            <person name="Yamada C."/>
            <person name="Ashburner M."/>
            <person name="Gelbart W.M."/>
            <person name="Rubin G.M."/>
            <person name="Lewis S.E."/>
        </authorList>
    </citation>
    <scope>GENOME REANNOTATION</scope>
    <source>
        <strain>Berkeley</strain>
    </source>
</reference>
<reference key="3">
    <citation type="journal article" date="2002" name="Genome Biol.">
        <title>A Drosophila full-length cDNA resource.</title>
        <authorList>
            <person name="Stapleton M."/>
            <person name="Carlson J.W."/>
            <person name="Brokstein P."/>
            <person name="Yu C."/>
            <person name="Champe M."/>
            <person name="George R.A."/>
            <person name="Guarin H."/>
            <person name="Kronmiller B."/>
            <person name="Pacleb J.M."/>
            <person name="Park S."/>
            <person name="Wan K.H."/>
            <person name="Rubin G.M."/>
            <person name="Celniker S.E."/>
        </authorList>
    </citation>
    <scope>NUCLEOTIDE SEQUENCE [LARGE SCALE MRNA]</scope>
    <source>
        <strain>Berkeley</strain>
        <tissue>Embryo</tissue>
    </source>
</reference>
<reference key="4">
    <citation type="journal article" date="2011" name="Mol. Cell">
        <title>The little elongation complex regulates small nuclear RNA transcription.</title>
        <authorList>
            <person name="Smith E.R."/>
            <person name="Lin C."/>
            <person name="Garrett A.S."/>
            <person name="Thornton J."/>
            <person name="Mohaghegh N."/>
            <person name="Hu D."/>
            <person name="Jackson J."/>
            <person name="Saraf A."/>
            <person name="Swanson S.K."/>
            <person name="Seidel C."/>
            <person name="Florens L."/>
            <person name="Washburn M.P."/>
            <person name="Eissenberg J.C."/>
            <person name="Shilatifard A."/>
        </authorList>
    </citation>
    <scope>FUNCTION</scope>
    <scope>IDENTIFICATION IN THE LEC COMPLEX</scope>
</reference>
<organism>
    <name type="scientific">Drosophila melanogaster</name>
    <name type="common">Fruit fly</name>
    <dbReference type="NCBI Taxonomy" id="7227"/>
    <lineage>
        <taxon>Eukaryota</taxon>
        <taxon>Metazoa</taxon>
        <taxon>Ecdysozoa</taxon>
        <taxon>Arthropoda</taxon>
        <taxon>Hexapoda</taxon>
        <taxon>Insecta</taxon>
        <taxon>Pterygota</taxon>
        <taxon>Neoptera</taxon>
        <taxon>Endopterygota</taxon>
        <taxon>Diptera</taxon>
        <taxon>Brachycera</taxon>
        <taxon>Muscomorpha</taxon>
        <taxon>Ephydroidea</taxon>
        <taxon>Drosophilidae</taxon>
        <taxon>Drosophila</taxon>
        <taxon>Sophophora</taxon>
    </lineage>
</organism>
<evidence type="ECO:0000256" key="1">
    <source>
        <dbReference type="SAM" id="MobiDB-lite"/>
    </source>
</evidence>
<evidence type="ECO:0000269" key="2">
    <source>
    </source>
</evidence>
<evidence type="ECO:0000305" key="3"/>
<proteinExistence type="evidence at protein level"/>
<accession>Q8SZZ8</accession>
<accession>Q9VDE0</accession>
<protein>
    <recommendedName>
        <fullName>Little elongation complex subunit 2</fullName>
    </recommendedName>
    <alternativeName>
        <fullName>Interactor of little elongator complex ELL subunit 2</fullName>
    </alternativeName>
</protein>
<name>ICE2_DROME</name>
<keyword id="KW-0539">Nucleus</keyword>
<keyword id="KW-1185">Reference proteome</keyword>
<keyword id="KW-0804">Transcription</keyword>
<keyword id="KW-0805">Transcription regulation</keyword>
<feature type="chain" id="PRO_0000430425" description="Little elongation complex subunit 2">
    <location>
        <begin position="1"/>
        <end position="684"/>
    </location>
</feature>
<feature type="region of interest" description="Disordered" evidence="1">
    <location>
        <begin position="69"/>
        <end position="91"/>
    </location>
</feature>
<dbReference type="EMBL" id="AE014297">
    <property type="protein sequence ID" value="AAF55856.2"/>
    <property type="molecule type" value="Genomic_DNA"/>
</dbReference>
<dbReference type="EMBL" id="AY069681">
    <property type="protein sequence ID" value="AAL39826.1"/>
    <property type="molecule type" value="mRNA"/>
</dbReference>
<dbReference type="RefSeq" id="NP_650946.3">
    <property type="nucleotide sequence ID" value="NM_142689.4"/>
</dbReference>
<dbReference type="SMR" id="Q8SZZ8"/>
<dbReference type="BioGRID" id="67478">
    <property type="interactions" value="5"/>
</dbReference>
<dbReference type="ComplexPortal" id="CPX-2710">
    <property type="entry name" value="Little elongation complex"/>
</dbReference>
<dbReference type="FunCoup" id="Q8SZZ8">
    <property type="interactions" value="154"/>
</dbReference>
<dbReference type="IntAct" id="Q8SZZ8">
    <property type="interactions" value="4"/>
</dbReference>
<dbReference type="STRING" id="7227.FBpp0083418"/>
<dbReference type="PaxDb" id="7227-FBpp0083418"/>
<dbReference type="DNASU" id="42507"/>
<dbReference type="EnsemblMetazoa" id="FBtr0084015">
    <property type="protein sequence ID" value="FBpp0083418"/>
    <property type="gene ID" value="FBgn0038860"/>
</dbReference>
<dbReference type="GeneID" id="42507"/>
<dbReference type="KEGG" id="dme:Dmel_CG10825"/>
<dbReference type="UCSC" id="CG10825-RA">
    <property type="organism name" value="d. melanogaster"/>
</dbReference>
<dbReference type="AGR" id="FB:FBgn0038860"/>
<dbReference type="CTD" id="79664"/>
<dbReference type="FlyBase" id="FBgn0038860">
    <property type="gene designation" value="Ice2"/>
</dbReference>
<dbReference type="VEuPathDB" id="VectorBase:FBgn0038860"/>
<dbReference type="eggNOG" id="ENOG502QUWA">
    <property type="taxonomic scope" value="Eukaryota"/>
</dbReference>
<dbReference type="HOGENOM" id="CLU_416366_0_0_1"/>
<dbReference type="InParanoid" id="Q8SZZ8"/>
<dbReference type="OMA" id="CGCEIMT"/>
<dbReference type="OrthoDB" id="6288737at2759"/>
<dbReference type="PhylomeDB" id="Q8SZZ8"/>
<dbReference type="SignaLink" id="Q8SZZ8"/>
<dbReference type="BioGRID-ORCS" id="42507">
    <property type="hits" value="0 hits in 1 CRISPR screen"/>
</dbReference>
<dbReference type="GenomeRNAi" id="42507"/>
<dbReference type="PRO" id="PR:Q8SZZ8"/>
<dbReference type="Proteomes" id="UP000000803">
    <property type="component" value="Chromosome 3R"/>
</dbReference>
<dbReference type="Bgee" id="FBgn0038860">
    <property type="expression patterns" value="Expressed in cleaving embryo and 20 other cell types or tissues"/>
</dbReference>
<dbReference type="ExpressionAtlas" id="Q8SZZ8">
    <property type="expression patterns" value="baseline and differential"/>
</dbReference>
<dbReference type="GO" id="GO:0032783">
    <property type="term" value="C:super elongation complex"/>
    <property type="evidence" value="ECO:0000353"/>
    <property type="project" value="FlyBase"/>
</dbReference>
<dbReference type="GO" id="GO:0008023">
    <property type="term" value="C:transcription elongation factor complex"/>
    <property type="evidence" value="ECO:0000314"/>
    <property type="project" value="UniProtKB"/>
</dbReference>
<dbReference type="InterPro" id="IPR019535">
    <property type="entry name" value="ICE2_C"/>
</dbReference>
<dbReference type="PANTHER" id="PTHR14633">
    <property type="entry name" value="LITTLE ELONGATION COMPLEX SUBUNIT 2"/>
    <property type="match status" value="1"/>
</dbReference>
<dbReference type="PANTHER" id="PTHR14633:SF3">
    <property type="entry name" value="LITTLE ELONGATION COMPLEX SUBUNIT 2"/>
    <property type="match status" value="1"/>
</dbReference>
<dbReference type="Pfam" id="PF10505">
    <property type="entry name" value="NARG2_C"/>
    <property type="match status" value="1"/>
</dbReference>
<sequence>MFSMDSFAMDKDAKLYEGNALFRNQPSYKVFNKSFEHVDDALYTLLNEVEPDVLRMELQETGDLFKSFNRNSALRDPRNNEVPPKPTRDLTTASSLYSFPNPLEQYSELNLKQQAACMRVLLAWQCSQPVDEQDIVVWQATEKKRYNEQQRVQKYIHDHEQGRKEVIYAPMKSLVAVYRKWYELGVKKLQQTYPNDSYMTFSGLPQLPQCRSLNAQTASIEQVELERIVGRVRLLPEVEVRHEALRTLRLRLDRYATRETRAPVQLLREEDKELELEAGNVFVLPLDSLLMLLTTGSYIDLPTEMFLSLRESPNSKHKCMEFQSPFPPRNCGWHTNSLILKLAYGAYISQPGQAKWLDFNINGAVKEVPDEPACDKSSIDLQMVYKPRAIDQQPSDIEDGNCNSALVSWTLRCKGEGDDCNDFQIFSTLSIPAVKDSSGKEPLGCHFIKLENKPDCGCEIMSKYELISAWVQLKLMRAEMGHCTRISLRDFEPMLEEKLTLISLEQQLHDYYNTSMPQLLSNLCEFLKLLDTVPAGDYLLRYSPKYKDKFLLCIVTKEATPQSFQLHQLLTESIPSDQAFLTQSSYLPISPTLCGRLHEELHLLPCAFPAKANGRSVQRRKVVVPIPEPSRQAPVRRQRLKKWSEAQTREFRRRCKVDQKKRARARKTAAANKEKIELEKIMTL</sequence>
<comment type="function">
    <text evidence="2">Component of the little elongation complex (LEC), a complex required to regulate small nuclear RNA (snRNA) gene transcription by RNA polymerase II and III.</text>
</comment>
<comment type="subunit">
    <text evidence="2">Component of the little elongation complex (LEC), at least composed of Ell, Eaf, Ice1 and Ice2.</text>
</comment>
<comment type="subcellular location">
    <subcellularLocation>
        <location evidence="3">Nucleus</location>
    </subcellularLocation>
</comment>
<comment type="similarity">
    <text evidence="3">Belongs to the ICE2 family.</text>
</comment>
<gene>
    <name type="primary">Ice2</name>
    <name type="ORF">CG10825</name>
</gene>